<name>H2BN1_HUMAN</name>
<dbReference type="EMBL" id="AC084809">
    <property type="status" value="NOT_ANNOTATED_CDS"/>
    <property type="molecule type" value="Genomic_DNA"/>
</dbReference>
<dbReference type="CCDS" id="CCDS92289.1"/>
<dbReference type="RefSeq" id="NP_001388269.1">
    <property type="nucleotide sequence ID" value="NM_001401340.1"/>
</dbReference>
<dbReference type="SMR" id="P0DW85"/>
<dbReference type="Ensembl" id="ENST00000704639.1">
    <property type="protein sequence ID" value="ENSP00000515970.1"/>
    <property type="gene ID" value="ENSG00000290320.1"/>
</dbReference>
<dbReference type="GeneID" id="124188214"/>
<dbReference type="MANE-Select" id="ENST00000704639.1">
    <property type="protein sequence ID" value="ENSP00000515970.1"/>
    <property type="RefSeq nucleotide sequence ID" value="NM_001401340.1"/>
    <property type="RefSeq protein sequence ID" value="NP_001388269.1"/>
</dbReference>
<dbReference type="AGR" id="HGNC:56200"/>
<dbReference type="GeneCards" id="H2BN1"/>
<dbReference type="HGNC" id="HGNC:56200">
    <property type="gene designation" value="H2BN1"/>
</dbReference>
<dbReference type="GeneTree" id="ENSGT00740000117022"/>
<dbReference type="PRO" id="PR:P0DW85"/>
<dbReference type="Proteomes" id="UP000005640">
    <property type="component" value="Chromosome 17"/>
</dbReference>
<dbReference type="GO" id="GO:0000786">
    <property type="term" value="C:nucleosome"/>
    <property type="evidence" value="ECO:0007669"/>
    <property type="project" value="InterPro"/>
</dbReference>
<dbReference type="GO" id="GO:0005634">
    <property type="term" value="C:nucleus"/>
    <property type="evidence" value="ECO:0007669"/>
    <property type="project" value="UniProtKB-SubCell"/>
</dbReference>
<dbReference type="GO" id="GO:0003677">
    <property type="term" value="F:DNA binding"/>
    <property type="evidence" value="ECO:0007669"/>
    <property type="project" value="InterPro"/>
</dbReference>
<dbReference type="GO" id="GO:0046982">
    <property type="term" value="F:protein heterodimerization activity"/>
    <property type="evidence" value="ECO:0007669"/>
    <property type="project" value="InterPro"/>
</dbReference>
<dbReference type="GO" id="GO:0030527">
    <property type="term" value="F:structural constituent of chromatin"/>
    <property type="evidence" value="ECO:0007669"/>
    <property type="project" value="InterPro"/>
</dbReference>
<dbReference type="Gene3D" id="1.10.20.10">
    <property type="entry name" value="Histone, subunit A"/>
    <property type="match status" value="1"/>
</dbReference>
<dbReference type="InterPro" id="IPR009072">
    <property type="entry name" value="Histone-fold"/>
</dbReference>
<dbReference type="InterPro" id="IPR000558">
    <property type="entry name" value="Histone_H2B"/>
</dbReference>
<dbReference type="PRINTS" id="PR00621">
    <property type="entry name" value="HISTONEH2B"/>
</dbReference>
<dbReference type="SUPFAM" id="SSF47113">
    <property type="entry name" value="Histone-fold"/>
    <property type="match status" value="1"/>
</dbReference>
<sequence>MYFICLNDLRFPKNKTELYFPVKKKHEWANSATGKKRRWRKKRRKEAYFSYMGKILKQIHPDFSGRSWVLYALGALNAWQLEWVSLEAFRLSFYNHRRAITGREILGAVKQRSSQKSF</sequence>
<protein>
    <recommendedName>
        <fullName evidence="3">Histone H2B.N</fullName>
        <shortName evidence="2">H2B.N</shortName>
    </recommendedName>
    <alternativeName>
        <fullName evidence="4">H2B.N variant histone 1</fullName>
    </alternativeName>
</protein>
<proteinExistence type="evidence at transcript level"/>
<feature type="chain" id="PRO_0000456447" description="Histone H2B.N">
    <location>
        <begin position="1"/>
        <end position="118"/>
    </location>
</feature>
<accession>P0DW85</accession>
<comment type="function">
    <text evidence="3">Core component of nucleosome. Nucleosomes wrap and compact DNA into chromatin, limiting DNA accessibility to the cellular machineries which require DNA as a template. Histones thereby play a central role in transcription regulation, DNA repair, DNA replication and chromosomal stability. DNA accessibility is regulated via a complex set of post-translational modifications of histones, also called histone code, and nucleosome remodeling.</text>
</comment>
<comment type="subunit">
    <text evidence="3">The nucleosome is a histone octamer containing two molecules each of H2A, H2B, H3 and H4 assembled in one H3-H4 heterotetramer and two H2A-H2B heterodimers. The octamer wraps approximately 147 bp of DNA.</text>
</comment>
<comment type="subcellular location">
    <subcellularLocation>
        <location evidence="3">Nucleus</location>
    </subcellularLocation>
    <subcellularLocation>
        <location evidence="3">Chromosome</location>
    </subcellularLocation>
</comment>
<comment type="tissue specificity">
    <text evidence="1">Expressed in germline (PubMed:35099534). Predominantly expressed in oocytes (PubMed:35099534).</text>
</comment>
<comment type="similarity">
    <text evidence="3">Belongs to the histone H2B family.</text>
</comment>
<reference key="1">
    <citation type="journal article" date="2006" name="Nature">
        <title>DNA sequence of human chromosome 17 and analysis of rearrangement in the human lineage.</title>
        <authorList>
            <person name="Zody M.C."/>
            <person name="Garber M."/>
            <person name="Adams D.J."/>
            <person name="Sharpe T."/>
            <person name="Harrow J."/>
            <person name="Lupski J.R."/>
            <person name="Nicholson C."/>
            <person name="Searle S.M."/>
            <person name="Wilming L."/>
            <person name="Young S.K."/>
            <person name="Abouelleil A."/>
            <person name="Allen N.R."/>
            <person name="Bi W."/>
            <person name="Bloom T."/>
            <person name="Borowsky M.L."/>
            <person name="Bugalter B.E."/>
            <person name="Butler J."/>
            <person name="Chang J.L."/>
            <person name="Chen C.-K."/>
            <person name="Cook A."/>
            <person name="Corum B."/>
            <person name="Cuomo C.A."/>
            <person name="de Jong P.J."/>
            <person name="DeCaprio D."/>
            <person name="Dewar K."/>
            <person name="FitzGerald M."/>
            <person name="Gilbert J."/>
            <person name="Gibson R."/>
            <person name="Gnerre S."/>
            <person name="Goldstein S."/>
            <person name="Grafham D.V."/>
            <person name="Grocock R."/>
            <person name="Hafez N."/>
            <person name="Hagopian D.S."/>
            <person name="Hart E."/>
            <person name="Norman C.H."/>
            <person name="Humphray S."/>
            <person name="Jaffe D.B."/>
            <person name="Jones M."/>
            <person name="Kamal M."/>
            <person name="Khodiyar V.K."/>
            <person name="LaButti K."/>
            <person name="Laird G."/>
            <person name="Lehoczky J."/>
            <person name="Liu X."/>
            <person name="Lokyitsang T."/>
            <person name="Loveland J."/>
            <person name="Lui A."/>
            <person name="Macdonald P."/>
            <person name="Major J.E."/>
            <person name="Matthews L."/>
            <person name="Mauceli E."/>
            <person name="McCarroll S.A."/>
            <person name="Mihalev A.H."/>
            <person name="Mudge J."/>
            <person name="Nguyen C."/>
            <person name="Nicol R."/>
            <person name="O'Leary S.B."/>
            <person name="Osoegawa K."/>
            <person name="Schwartz D.C."/>
            <person name="Shaw-Smith C."/>
            <person name="Stankiewicz P."/>
            <person name="Steward C."/>
            <person name="Swarbreck D."/>
            <person name="Venkataraman V."/>
            <person name="Whittaker C.A."/>
            <person name="Yang X."/>
            <person name="Zimmer A.R."/>
            <person name="Bradley A."/>
            <person name="Hubbard T."/>
            <person name="Birren B.W."/>
            <person name="Rogers J."/>
            <person name="Lander E.S."/>
            <person name="Nusbaum C."/>
        </authorList>
    </citation>
    <scope>NUCLEOTIDE SEQUENCE [LARGE SCALE GENOMIC DNA]</scope>
</reference>
<reference key="2">
    <citation type="journal article" date="2022" name="Mol. Biol. Evol.">
        <title>Novel Classes and Evolutionary Turnover of Histone H2B Variants in the Mammalian Germline.</title>
        <authorList>
            <person name="Raman P."/>
            <person name="Rominger M.C."/>
            <person name="Young J.M."/>
            <person name="Molaro A."/>
            <person name="Tsukiyama T."/>
            <person name="Malik H.S."/>
        </authorList>
    </citation>
    <scope>TISSUE SPECIFICITY</scope>
</reference>
<evidence type="ECO:0000269" key="1">
    <source>
    </source>
</evidence>
<evidence type="ECO:0000303" key="2">
    <source>
    </source>
</evidence>
<evidence type="ECO:0000305" key="3"/>
<evidence type="ECO:0000312" key="4">
    <source>
        <dbReference type="HGNC" id="HGNC:56200"/>
    </source>
</evidence>
<keyword id="KW-0158">Chromosome</keyword>
<keyword id="KW-0539">Nucleus</keyword>
<keyword id="KW-1185">Reference proteome</keyword>
<organism>
    <name type="scientific">Homo sapiens</name>
    <name type="common">Human</name>
    <dbReference type="NCBI Taxonomy" id="9606"/>
    <lineage>
        <taxon>Eukaryota</taxon>
        <taxon>Metazoa</taxon>
        <taxon>Chordata</taxon>
        <taxon>Craniata</taxon>
        <taxon>Vertebrata</taxon>
        <taxon>Euteleostomi</taxon>
        <taxon>Mammalia</taxon>
        <taxon>Eutheria</taxon>
        <taxon>Euarchontoglires</taxon>
        <taxon>Primates</taxon>
        <taxon>Haplorrhini</taxon>
        <taxon>Catarrhini</taxon>
        <taxon>Hominidae</taxon>
        <taxon>Homo</taxon>
    </lineage>
</organism>
<gene>
    <name evidence="4" type="primary">H2BN1</name>
</gene>